<proteinExistence type="inferred from homology"/>
<accession>A6W097</accession>
<feature type="chain" id="PRO_1000138538" description="Orotidine 5'-phosphate decarboxylase">
    <location>
        <begin position="1"/>
        <end position="235"/>
    </location>
</feature>
<feature type="active site" description="Proton donor" evidence="1">
    <location>
        <position position="63"/>
    </location>
</feature>
<feature type="binding site" evidence="1">
    <location>
        <position position="12"/>
    </location>
    <ligand>
        <name>substrate</name>
    </ligand>
</feature>
<feature type="binding site" evidence="1">
    <location>
        <position position="34"/>
    </location>
    <ligand>
        <name>substrate</name>
    </ligand>
</feature>
<feature type="binding site" evidence="1">
    <location>
        <begin position="61"/>
        <end position="70"/>
    </location>
    <ligand>
        <name>substrate</name>
    </ligand>
</feature>
<feature type="binding site" evidence="1">
    <location>
        <position position="121"/>
    </location>
    <ligand>
        <name>substrate</name>
    </ligand>
</feature>
<feature type="binding site" evidence="1">
    <location>
        <position position="182"/>
    </location>
    <ligand>
        <name>substrate</name>
    </ligand>
</feature>
<feature type="binding site" evidence="1">
    <location>
        <position position="191"/>
    </location>
    <ligand>
        <name>substrate</name>
    </ligand>
</feature>
<feature type="binding site" evidence="1">
    <location>
        <position position="211"/>
    </location>
    <ligand>
        <name>substrate</name>
    </ligand>
</feature>
<feature type="binding site" evidence="1">
    <location>
        <position position="212"/>
    </location>
    <ligand>
        <name>substrate</name>
    </ligand>
</feature>
<gene>
    <name evidence="1" type="primary">pyrF</name>
    <name type="ordered locus">Mmwyl1_3220</name>
</gene>
<sequence length="235" mass="25027">MSCQSPIVVALDYPTMAQSIEMAKRLDPEQCRVKVGKELFTTAGPVILDELHKLGFEIFLDLKFHDIPNTVANAVCVAAKAGVWMVNVHASGGRRMMEASANALQKLPDNKTLLIAVTVLTSMDQSDLIEIGIDATPEQHVKRLAALAKSSGMDGVVCSAQESSMLSAELGKDFVLVTPGIRPAGSDQGDQKRIMTPVEAMAAGSHYLVMGRPITQANDPIAVLTQANADLGLMA</sequence>
<dbReference type="EC" id="4.1.1.23" evidence="1"/>
<dbReference type="EMBL" id="CP000749">
    <property type="protein sequence ID" value="ABR72126.1"/>
    <property type="molecule type" value="Genomic_DNA"/>
</dbReference>
<dbReference type="SMR" id="A6W097"/>
<dbReference type="STRING" id="400668.Mmwyl1_3220"/>
<dbReference type="KEGG" id="mmw:Mmwyl1_3220"/>
<dbReference type="eggNOG" id="COG0284">
    <property type="taxonomic scope" value="Bacteria"/>
</dbReference>
<dbReference type="HOGENOM" id="CLU_067069_0_0_6"/>
<dbReference type="OrthoDB" id="9806203at2"/>
<dbReference type="UniPathway" id="UPA00070">
    <property type="reaction ID" value="UER00120"/>
</dbReference>
<dbReference type="GO" id="GO:0005829">
    <property type="term" value="C:cytosol"/>
    <property type="evidence" value="ECO:0007669"/>
    <property type="project" value="TreeGrafter"/>
</dbReference>
<dbReference type="GO" id="GO:0004590">
    <property type="term" value="F:orotidine-5'-phosphate decarboxylase activity"/>
    <property type="evidence" value="ECO:0007669"/>
    <property type="project" value="UniProtKB-UniRule"/>
</dbReference>
<dbReference type="GO" id="GO:0006207">
    <property type="term" value="P:'de novo' pyrimidine nucleobase biosynthetic process"/>
    <property type="evidence" value="ECO:0007669"/>
    <property type="project" value="InterPro"/>
</dbReference>
<dbReference type="GO" id="GO:0044205">
    <property type="term" value="P:'de novo' UMP biosynthetic process"/>
    <property type="evidence" value="ECO:0007669"/>
    <property type="project" value="UniProtKB-UniRule"/>
</dbReference>
<dbReference type="CDD" id="cd04725">
    <property type="entry name" value="OMP_decarboxylase_like"/>
    <property type="match status" value="1"/>
</dbReference>
<dbReference type="FunFam" id="3.20.20.70:FF:000015">
    <property type="entry name" value="Orotidine 5'-phosphate decarboxylase"/>
    <property type="match status" value="1"/>
</dbReference>
<dbReference type="Gene3D" id="3.20.20.70">
    <property type="entry name" value="Aldolase class I"/>
    <property type="match status" value="1"/>
</dbReference>
<dbReference type="HAMAP" id="MF_01200_B">
    <property type="entry name" value="OMPdecase_type1_B"/>
    <property type="match status" value="1"/>
</dbReference>
<dbReference type="InterPro" id="IPR013785">
    <property type="entry name" value="Aldolase_TIM"/>
</dbReference>
<dbReference type="InterPro" id="IPR014732">
    <property type="entry name" value="OMPdecase"/>
</dbReference>
<dbReference type="InterPro" id="IPR018089">
    <property type="entry name" value="OMPdecase_AS"/>
</dbReference>
<dbReference type="InterPro" id="IPR047596">
    <property type="entry name" value="OMPdecase_bac"/>
</dbReference>
<dbReference type="InterPro" id="IPR001754">
    <property type="entry name" value="OMPdeCOase_dom"/>
</dbReference>
<dbReference type="InterPro" id="IPR011060">
    <property type="entry name" value="RibuloseP-bd_barrel"/>
</dbReference>
<dbReference type="NCBIfam" id="NF001273">
    <property type="entry name" value="PRK00230.1"/>
    <property type="match status" value="1"/>
</dbReference>
<dbReference type="NCBIfam" id="TIGR01740">
    <property type="entry name" value="pyrF"/>
    <property type="match status" value="1"/>
</dbReference>
<dbReference type="PANTHER" id="PTHR32119">
    <property type="entry name" value="OROTIDINE 5'-PHOSPHATE DECARBOXYLASE"/>
    <property type="match status" value="1"/>
</dbReference>
<dbReference type="PANTHER" id="PTHR32119:SF2">
    <property type="entry name" value="OROTIDINE 5'-PHOSPHATE DECARBOXYLASE"/>
    <property type="match status" value="1"/>
</dbReference>
<dbReference type="Pfam" id="PF00215">
    <property type="entry name" value="OMPdecase"/>
    <property type="match status" value="1"/>
</dbReference>
<dbReference type="SMART" id="SM00934">
    <property type="entry name" value="OMPdecase"/>
    <property type="match status" value="1"/>
</dbReference>
<dbReference type="SUPFAM" id="SSF51366">
    <property type="entry name" value="Ribulose-phoshate binding barrel"/>
    <property type="match status" value="1"/>
</dbReference>
<dbReference type="PROSITE" id="PS00156">
    <property type="entry name" value="OMPDECASE"/>
    <property type="match status" value="1"/>
</dbReference>
<evidence type="ECO:0000255" key="1">
    <source>
        <dbReference type="HAMAP-Rule" id="MF_01200"/>
    </source>
</evidence>
<comment type="function">
    <text evidence="1">Catalyzes the decarboxylation of orotidine 5'-monophosphate (OMP) to uridine 5'-monophosphate (UMP).</text>
</comment>
<comment type="catalytic activity">
    <reaction evidence="1">
        <text>orotidine 5'-phosphate + H(+) = UMP + CO2</text>
        <dbReference type="Rhea" id="RHEA:11596"/>
        <dbReference type="ChEBI" id="CHEBI:15378"/>
        <dbReference type="ChEBI" id="CHEBI:16526"/>
        <dbReference type="ChEBI" id="CHEBI:57538"/>
        <dbReference type="ChEBI" id="CHEBI:57865"/>
        <dbReference type="EC" id="4.1.1.23"/>
    </reaction>
</comment>
<comment type="pathway">
    <text evidence="1">Pyrimidine metabolism; UMP biosynthesis via de novo pathway; UMP from orotate: step 2/2.</text>
</comment>
<comment type="subunit">
    <text evidence="1">Homodimer.</text>
</comment>
<comment type="similarity">
    <text evidence="1">Belongs to the OMP decarboxylase family. Type 1 subfamily.</text>
</comment>
<protein>
    <recommendedName>
        <fullName evidence="1">Orotidine 5'-phosphate decarboxylase</fullName>
        <ecNumber evidence="1">4.1.1.23</ecNumber>
    </recommendedName>
    <alternativeName>
        <fullName evidence="1">OMP decarboxylase</fullName>
        <shortName evidence="1">OMPDCase</shortName>
        <shortName evidence="1">OMPdecase</shortName>
    </alternativeName>
</protein>
<reference key="1">
    <citation type="submission" date="2007-06" db="EMBL/GenBank/DDBJ databases">
        <title>Complete sequence of Marinomonas sp. MWYL1.</title>
        <authorList>
            <consortium name="US DOE Joint Genome Institute"/>
            <person name="Copeland A."/>
            <person name="Lucas S."/>
            <person name="Lapidus A."/>
            <person name="Barry K."/>
            <person name="Glavina del Rio T."/>
            <person name="Dalin E."/>
            <person name="Tice H."/>
            <person name="Pitluck S."/>
            <person name="Kiss H."/>
            <person name="Brettin T."/>
            <person name="Bruce D."/>
            <person name="Detter J.C."/>
            <person name="Han C."/>
            <person name="Schmutz J."/>
            <person name="Larimer F."/>
            <person name="Land M."/>
            <person name="Hauser L."/>
            <person name="Kyrpides N."/>
            <person name="Kim E."/>
            <person name="Johnston A.W.B."/>
            <person name="Todd J.D."/>
            <person name="Rogers R."/>
            <person name="Wexler M."/>
            <person name="Bond P.L."/>
            <person name="Li Y."/>
            <person name="Richardson P."/>
        </authorList>
    </citation>
    <scope>NUCLEOTIDE SEQUENCE [LARGE SCALE GENOMIC DNA]</scope>
    <source>
        <strain>MWYL1</strain>
    </source>
</reference>
<name>PYRF_MARMS</name>
<keyword id="KW-0210">Decarboxylase</keyword>
<keyword id="KW-0456">Lyase</keyword>
<keyword id="KW-0665">Pyrimidine biosynthesis</keyword>
<organism>
    <name type="scientific">Marinomonas sp. (strain MWYL1)</name>
    <dbReference type="NCBI Taxonomy" id="400668"/>
    <lineage>
        <taxon>Bacteria</taxon>
        <taxon>Pseudomonadati</taxon>
        <taxon>Pseudomonadota</taxon>
        <taxon>Gammaproteobacteria</taxon>
        <taxon>Oceanospirillales</taxon>
        <taxon>Oceanospirillaceae</taxon>
        <taxon>Marinomonas</taxon>
    </lineage>
</organism>